<gene>
    <name type="ordered locus">MIMI_L567</name>
</gene>
<organism>
    <name type="scientific">Acanthamoeba polyphaga mimivirus</name>
    <name type="common">APMV</name>
    <dbReference type="NCBI Taxonomy" id="212035"/>
    <lineage>
        <taxon>Viruses</taxon>
        <taxon>Varidnaviria</taxon>
        <taxon>Bamfordvirae</taxon>
        <taxon>Nucleocytoviricota</taxon>
        <taxon>Megaviricetes</taxon>
        <taxon>Imitervirales</taxon>
        <taxon>Mimiviridae</taxon>
        <taxon>Megamimivirinae</taxon>
        <taxon>Mimivirus</taxon>
        <taxon>Mimivirus bradfordmassiliense</taxon>
    </lineage>
</organism>
<evidence type="ECO:0000255" key="1"/>
<evidence type="ECO:0000269" key="2">
    <source>
    </source>
</evidence>
<accession>Q5UR50</accession>
<sequence>MNHYDQYQKYKKKYLDLKNQLNNSSQYGGNCGNYGNNQFNNQFNSQATNRYQTGGAEFDLKDEVAFWGRQMMEHLLLLHLGLDEEELKNSALQNHMDWKRYLTENFFSKGVNPGPDQAFLTTNELEKIGLLNKNVVNGLIDQTIQYKSKLVKTLNSGQWVGWIYPAMAQHMLEEAEYFKRKVNGPDYTPEQETKFVVHHHSTEMGATTQLLDPTEKDNIKIAKSYADICMSKLSGRNKKPFPNQWTSQEEAILRGQDPVDLATLMRISLKYSRELTQFAKETGQKIDSKQLKSIIHPVLAHHIFREFYRFTKRLEQLGAQ</sequence>
<proteinExistence type="evidence at protein level"/>
<keyword id="KW-0175">Coiled coil</keyword>
<keyword id="KW-1185">Reference proteome</keyword>
<keyword id="KW-0946">Virion</keyword>
<dbReference type="EMBL" id="AY653733">
    <property type="protein sequence ID" value="AAV50830.1"/>
    <property type="molecule type" value="Genomic_DNA"/>
</dbReference>
<dbReference type="SMR" id="Q5UR50"/>
<dbReference type="KEGG" id="vg:9925204"/>
<dbReference type="OrthoDB" id="13711at10239"/>
<dbReference type="Proteomes" id="UP000001134">
    <property type="component" value="Genome"/>
</dbReference>
<dbReference type="GO" id="GO:0044423">
    <property type="term" value="C:virion component"/>
    <property type="evidence" value="ECO:0007669"/>
    <property type="project" value="UniProtKB-KW"/>
</dbReference>
<dbReference type="Gene3D" id="1.20.1260.120">
    <property type="entry name" value="Protein of unknown function DUF2935"/>
    <property type="match status" value="1"/>
</dbReference>
<dbReference type="InterPro" id="IPR021328">
    <property type="entry name" value="CotB-like"/>
</dbReference>
<dbReference type="Pfam" id="PF11155">
    <property type="entry name" value="DUF2935"/>
    <property type="match status" value="2"/>
</dbReference>
<dbReference type="SUPFAM" id="SSF158430">
    <property type="entry name" value="Bacillus cereus metalloprotein-like"/>
    <property type="match status" value="2"/>
</dbReference>
<reference key="1">
    <citation type="journal article" date="2004" name="Science">
        <title>The 1.2-megabase genome sequence of Mimivirus.</title>
        <authorList>
            <person name="Raoult D."/>
            <person name="Audic S."/>
            <person name="Robert C."/>
            <person name="Abergel C."/>
            <person name="Renesto P."/>
            <person name="Ogata H."/>
            <person name="La Scola B."/>
            <person name="Susan M."/>
            <person name="Claverie J.-M."/>
        </authorList>
    </citation>
    <scope>NUCLEOTIDE SEQUENCE [LARGE SCALE GENOMIC DNA]</scope>
    <source>
        <strain>Rowbotham-Bradford</strain>
    </source>
</reference>
<reference key="2">
    <citation type="journal article" date="2006" name="J. Virol.">
        <title>Mimivirus giant particles incorporate a large fraction of anonymous and unique gene products.</title>
        <authorList>
            <person name="Renesto P."/>
            <person name="Abergel C."/>
            <person name="Decloquement P."/>
            <person name="Moinier D."/>
            <person name="Azza S."/>
            <person name="Ogata H."/>
            <person name="Fourquet P."/>
            <person name="Gorvel J.-P."/>
            <person name="Claverie J.-M."/>
            <person name="Raoult D."/>
        </authorList>
    </citation>
    <scope>IDENTIFICATION BY MASS SPECTROMETRY [LARGE SCALE ANALYSIS]</scope>
    <scope>SUBCELLULAR LOCATION</scope>
</reference>
<comment type="subcellular location">
    <subcellularLocation>
        <location evidence="2">Virion</location>
    </subcellularLocation>
</comment>
<organismHost>
    <name type="scientific">Acanthamoeba polyphaga</name>
    <name type="common">Amoeba</name>
    <dbReference type="NCBI Taxonomy" id="5757"/>
</organismHost>
<protein>
    <recommendedName>
        <fullName>Uncharacterized protein L567</fullName>
    </recommendedName>
</protein>
<feature type="chain" id="PRO_0000253280" description="Uncharacterized protein L567">
    <location>
        <begin position="1"/>
        <end position="320"/>
    </location>
</feature>
<feature type="coiled-coil region" evidence="1">
    <location>
        <begin position="1"/>
        <end position="26"/>
    </location>
</feature>
<name>YL567_MIMIV</name>